<evidence type="ECO:0000255" key="1">
    <source>
        <dbReference type="HAMAP-Rule" id="MF_00061"/>
    </source>
</evidence>
<comment type="function">
    <text evidence="1">Catalyzes the phosphorylation of the position 2 hydroxy group of 4-diphosphocytidyl-2C-methyl-D-erythritol.</text>
</comment>
<comment type="catalytic activity">
    <reaction evidence="1">
        <text>4-CDP-2-C-methyl-D-erythritol + ATP = 4-CDP-2-C-methyl-D-erythritol 2-phosphate + ADP + H(+)</text>
        <dbReference type="Rhea" id="RHEA:18437"/>
        <dbReference type="ChEBI" id="CHEBI:15378"/>
        <dbReference type="ChEBI" id="CHEBI:30616"/>
        <dbReference type="ChEBI" id="CHEBI:57823"/>
        <dbReference type="ChEBI" id="CHEBI:57919"/>
        <dbReference type="ChEBI" id="CHEBI:456216"/>
        <dbReference type="EC" id="2.7.1.148"/>
    </reaction>
</comment>
<comment type="pathway">
    <text evidence="1">Isoprenoid biosynthesis; isopentenyl diphosphate biosynthesis via DXP pathway; isopentenyl diphosphate from 1-deoxy-D-xylulose 5-phosphate: step 3/6.</text>
</comment>
<comment type="similarity">
    <text evidence="1">Belongs to the GHMP kinase family. IspE subfamily.</text>
</comment>
<feature type="chain" id="PRO_1000007839" description="4-diphosphocytidyl-2-C-methyl-D-erythritol kinase">
    <location>
        <begin position="1"/>
        <end position="270"/>
    </location>
</feature>
<feature type="active site" evidence="1">
    <location>
        <position position="8"/>
    </location>
</feature>
<feature type="active site" evidence="1">
    <location>
        <position position="132"/>
    </location>
</feature>
<feature type="binding site" evidence="1">
    <location>
        <begin position="90"/>
        <end position="100"/>
    </location>
    <ligand>
        <name>ATP</name>
        <dbReference type="ChEBI" id="CHEBI:30616"/>
    </ligand>
</feature>
<organism>
    <name type="scientific">Cytophaga hutchinsonii (strain ATCC 33406 / DSM 1761 / CIP 103989 / NBRC 15051 / NCIMB 9469 / D465)</name>
    <dbReference type="NCBI Taxonomy" id="269798"/>
    <lineage>
        <taxon>Bacteria</taxon>
        <taxon>Pseudomonadati</taxon>
        <taxon>Bacteroidota</taxon>
        <taxon>Cytophagia</taxon>
        <taxon>Cytophagales</taxon>
        <taxon>Cytophagaceae</taxon>
        <taxon>Cytophaga</taxon>
    </lineage>
</organism>
<keyword id="KW-0067">ATP-binding</keyword>
<keyword id="KW-0414">Isoprene biosynthesis</keyword>
<keyword id="KW-0418">Kinase</keyword>
<keyword id="KW-0547">Nucleotide-binding</keyword>
<keyword id="KW-1185">Reference proteome</keyword>
<keyword id="KW-0808">Transferase</keyword>
<reference key="1">
    <citation type="journal article" date="2007" name="Appl. Environ. Microbiol.">
        <title>Genome sequence of the cellulolytic gliding bacterium Cytophaga hutchinsonii.</title>
        <authorList>
            <person name="Xie G."/>
            <person name="Bruce D.C."/>
            <person name="Challacombe J.F."/>
            <person name="Chertkov O."/>
            <person name="Detter J.C."/>
            <person name="Gilna P."/>
            <person name="Han C.S."/>
            <person name="Lucas S."/>
            <person name="Misra M."/>
            <person name="Myers G.L."/>
            <person name="Richardson P."/>
            <person name="Tapia R."/>
            <person name="Thayer N."/>
            <person name="Thompson L.S."/>
            <person name="Brettin T.S."/>
            <person name="Henrissat B."/>
            <person name="Wilson D.B."/>
            <person name="McBride M.J."/>
        </authorList>
    </citation>
    <scope>NUCLEOTIDE SEQUENCE [LARGE SCALE GENOMIC DNA]</scope>
    <source>
        <strain>ATCC 33406 / DSM 1761 / JCM 20678 / CIP 103989 / IAM 12607 / NBRC 15051 / NCIMB 9469 / D465</strain>
    </source>
</reference>
<proteinExistence type="inferred from homology"/>
<gene>
    <name evidence="1" type="primary">ispE</name>
    <name type="ordered locus">CHU_1210</name>
</gene>
<dbReference type="EC" id="2.7.1.148" evidence="1"/>
<dbReference type="EMBL" id="CP000383">
    <property type="protein sequence ID" value="ABG58483.1"/>
    <property type="molecule type" value="Genomic_DNA"/>
</dbReference>
<dbReference type="RefSeq" id="WP_011584598.1">
    <property type="nucleotide sequence ID" value="NC_008255.1"/>
</dbReference>
<dbReference type="SMR" id="Q11VT3"/>
<dbReference type="STRING" id="269798.CHU_1210"/>
<dbReference type="KEGG" id="chu:CHU_1210"/>
<dbReference type="eggNOG" id="COG1947">
    <property type="taxonomic scope" value="Bacteria"/>
</dbReference>
<dbReference type="HOGENOM" id="CLU_053057_1_1_10"/>
<dbReference type="OrthoDB" id="9809438at2"/>
<dbReference type="UniPathway" id="UPA00056">
    <property type="reaction ID" value="UER00094"/>
</dbReference>
<dbReference type="Proteomes" id="UP000001822">
    <property type="component" value="Chromosome"/>
</dbReference>
<dbReference type="GO" id="GO:0050515">
    <property type="term" value="F:4-(cytidine 5'-diphospho)-2-C-methyl-D-erythritol kinase activity"/>
    <property type="evidence" value="ECO:0007669"/>
    <property type="project" value="UniProtKB-UniRule"/>
</dbReference>
<dbReference type="GO" id="GO:0005524">
    <property type="term" value="F:ATP binding"/>
    <property type="evidence" value="ECO:0007669"/>
    <property type="project" value="UniProtKB-UniRule"/>
</dbReference>
<dbReference type="GO" id="GO:0019288">
    <property type="term" value="P:isopentenyl diphosphate biosynthetic process, methylerythritol 4-phosphate pathway"/>
    <property type="evidence" value="ECO:0007669"/>
    <property type="project" value="UniProtKB-UniRule"/>
</dbReference>
<dbReference type="GO" id="GO:0016114">
    <property type="term" value="P:terpenoid biosynthetic process"/>
    <property type="evidence" value="ECO:0007669"/>
    <property type="project" value="InterPro"/>
</dbReference>
<dbReference type="Gene3D" id="3.30.230.10">
    <property type="match status" value="1"/>
</dbReference>
<dbReference type="Gene3D" id="3.30.70.890">
    <property type="entry name" value="GHMP kinase, C-terminal domain"/>
    <property type="match status" value="1"/>
</dbReference>
<dbReference type="HAMAP" id="MF_00061">
    <property type="entry name" value="IspE"/>
    <property type="match status" value="1"/>
</dbReference>
<dbReference type="InterPro" id="IPR013750">
    <property type="entry name" value="GHMP_kinase_C_dom"/>
</dbReference>
<dbReference type="InterPro" id="IPR036554">
    <property type="entry name" value="GHMP_kinase_C_sf"/>
</dbReference>
<dbReference type="InterPro" id="IPR006204">
    <property type="entry name" value="GHMP_kinase_N_dom"/>
</dbReference>
<dbReference type="InterPro" id="IPR004424">
    <property type="entry name" value="IspE"/>
</dbReference>
<dbReference type="InterPro" id="IPR020568">
    <property type="entry name" value="Ribosomal_Su5_D2-typ_SF"/>
</dbReference>
<dbReference type="InterPro" id="IPR014721">
    <property type="entry name" value="Ribsml_uS5_D2-typ_fold_subgr"/>
</dbReference>
<dbReference type="NCBIfam" id="TIGR00154">
    <property type="entry name" value="ispE"/>
    <property type="match status" value="1"/>
</dbReference>
<dbReference type="PANTHER" id="PTHR43527">
    <property type="entry name" value="4-DIPHOSPHOCYTIDYL-2-C-METHYL-D-ERYTHRITOL KINASE, CHLOROPLASTIC"/>
    <property type="match status" value="1"/>
</dbReference>
<dbReference type="PANTHER" id="PTHR43527:SF2">
    <property type="entry name" value="4-DIPHOSPHOCYTIDYL-2-C-METHYL-D-ERYTHRITOL KINASE, CHLOROPLASTIC"/>
    <property type="match status" value="1"/>
</dbReference>
<dbReference type="Pfam" id="PF08544">
    <property type="entry name" value="GHMP_kinases_C"/>
    <property type="match status" value="1"/>
</dbReference>
<dbReference type="Pfam" id="PF00288">
    <property type="entry name" value="GHMP_kinases_N"/>
    <property type="match status" value="1"/>
</dbReference>
<dbReference type="PIRSF" id="PIRSF010376">
    <property type="entry name" value="IspE"/>
    <property type="match status" value="1"/>
</dbReference>
<dbReference type="SUPFAM" id="SSF55060">
    <property type="entry name" value="GHMP Kinase, C-terminal domain"/>
    <property type="match status" value="1"/>
</dbReference>
<dbReference type="SUPFAM" id="SSF54211">
    <property type="entry name" value="Ribosomal protein S5 domain 2-like"/>
    <property type="match status" value="1"/>
</dbReference>
<sequence>MISFPNAKINLGLSVLSKRPDGYHNIETCFYPIPWNDMLEIIPAKETVFTSSGNNIPGTSASNLCLKTYTLLKEKYPLSPVHIHLHKRIPIGAGLGGGSSDAAFTCKLLNDVFALKLSAAEMEDIVRPVGSDCAFFIENTSILAHEKGDYFSHPGIVNLSGKWIYLIHPGIHVATKEAYDGVVPNTDRKPIGDILKQPLSVWKAELVNDFERSVFEKYPAIKTLKEQMYKQGAAYAAMSGSGSTVFGIFNTKPETFHENTSNIQSCIAPL</sequence>
<protein>
    <recommendedName>
        <fullName evidence="1">4-diphosphocytidyl-2-C-methyl-D-erythritol kinase</fullName>
        <shortName evidence="1">CMK</shortName>
        <ecNumber evidence="1">2.7.1.148</ecNumber>
    </recommendedName>
    <alternativeName>
        <fullName evidence="1">4-(cytidine-5'-diphospho)-2-C-methyl-D-erythritol kinase</fullName>
    </alternativeName>
</protein>
<name>ISPE_CYTH3</name>
<accession>Q11VT3</accession>